<keyword id="KW-0968">Cytoplasmic vesicle</keyword>
<keyword id="KW-0967">Endosome</keyword>
<keyword id="KW-0333">Golgi apparatus</keyword>
<keyword id="KW-0446">Lipid-binding</keyword>
<keyword id="KW-0472">Membrane</keyword>
<keyword id="KW-1185">Reference proteome</keyword>
<organism>
    <name type="scientific">Xenopus laevis</name>
    <name type="common">African clawed frog</name>
    <dbReference type="NCBI Taxonomy" id="8355"/>
    <lineage>
        <taxon>Eukaryota</taxon>
        <taxon>Metazoa</taxon>
        <taxon>Chordata</taxon>
        <taxon>Craniata</taxon>
        <taxon>Vertebrata</taxon>
        <taxon>Euteleostomi</taxon>
        <taxon>Amphibia</taxon>
        <taxon>Batrachia</taxon>
        <taxon>Anura</taxon>
        <taxon>Pipoidea</taxon>
        <taxon>Pipidae</taxon>
        <taxon>Xenopodinae</taxon>
        <taxon>Xenopus</taxon>
        <taxon>Xenopus</taxon>
    </lineage>
</organism>
<feature type="chain" id="PRO_0000297658" description="Clavesin-1">
    <location>
        <begin position="1"/>
        <end position="332"/>
    </location>
</feature>
<feature type="domain" description="CRAL-TRIO" evidence="2">
    <location>
        <begin position="96"/>
        <end position="257"/>
    </location>
</feature>
<feature type="region of interest" description="Disordered" evidence="3">
    <location>
        <begin position="300"/>
        <end position="332"/>
    </location>
</feature>
<feature type="compositionally biased region" description="Basic and acidic residues" evidence="3">
    <location>
        <begin position="313"/>
        <end position="323"/>
    </location>
</feature>
<accession>Q5M7E1</accession>
<dbReference type="EMBL" id="BC088689">
    <property type="protein sequence ID" value="AAH88689.1"/>
    <property type="molecule type" value="mRNA"/>
</dbReference>
<dbReference type="RefSeq" id="NP_001088883.1">
    <property type="nucleotide sequence ID" value="NM_001095414.1"/>
</dbReference>
<dbReference type="RefSeq" id="XP_018122140.1">
    <property type="nucleotide sequence ID" value="XM_018266651.1"/>
</dbReference>
<dbReference type="RefSeq" id="XP_018122141.1">
    <property type="nucleotide sequence ID" value="XM_018266652.1"/>
</dbReference>
<dbReference type="SMR" id="Q5M7E1"/>
<dbReference type="DNASU" id="496227"/>
<dbReference type="GeneID" id="496227"/>
<dbReference type="KEGG" id="xla:496227"/>
<dbReference type="AGR" id="Xenbase:XB-GENE-5740452"/>
<dbReference type="CTD" id="496227"/>
<dbReference type="Xenbase" id="XB-GENE-5740452">
    <property type="gene designation" value="clvs1.L"/>
</dbReference>
<dbReference type="OMA" id="RDKSRCQ"/>
<dbReference type="OrthoDB" id="7837562at2759"/>
<dbReference type="Proteomes" id="UP000186698">
    <property type="component" value="Chromosome 6L"/>
</dbReference>
<dbReference type="Bgee" id="496227">
    <property type="expression patterns" value="Expressed in testis and 3 other cell types or tissues"/>
</dbReference>
<dbReference type="GO" id="GO:0030136">
    <property type="term" value="C:clathrin-coated vesicle"/>
    <property type="evidence" value="ECO:0000250"/>
    <property type="project" value="UniProtKB"/>
</dbReference>
<dbReference type="GO" id="GO:0031901">
    <property type="term" value="C:early endosome membrane"/>
    <property type="evidence" value="ECO:0007669"/>
    <property type="project" value="UniProtKB-SubCell"/>
</dbReference>
<dbReference type="GO" id="GO:0005768">
    <property type="term" value="C:endosome"/>
    <property type="evidence" value="ECO:0000250"/>
    <property type="project" value="UniProtKB"/>
</dbReference>
<dbReference type="GO" id="GO:0005802">
    <property type="term" value="C:trans-Golgi network"/>
    <property type="evidence" value="ECO:0000250"/>
    <property type="project" value="UniProtKB"/>
</dbReference>
<dbReference type="GO" id="GO:1902936">
    <property type="term" value="F:phosphatidylinositol bisphosphate binding"/>
    <property type="evidence" value="ECO:0000318"/>
    <property type="project" value="GO_Central"/>
</dbReference>
<dbReference type="GO" id="GO:0080025">
    <property type="term" value="F:phosphatidylinositol-3,5-bisphosphate binding"/>
    <property type="evidence" value="ECO:0000250"/>
    <property type="project" value="UniProtKB"/>
</dbReference>
<dbReference type="GO" id="GO:0007040">
    <property type="term" value="P:lysosome organization"/>
    <property type="evidence" value="ECO:0000250"/>
    <property type="project" value="UniProtKB"/>
</dbReference>
<dbReference type="CDD" id="cd00170">
    <property type="entry name" value="SEC14"/>
    <property type="match status" value="1"/>
</dbReference>
<dbReference type="FunFam" id="1.10.8.20:FF:000001">
    <property type="entry name" value="Alpha-tocopherol transfer protein-like"/>
    <property type="match status" value="1"/>
</dbReference>
<dbReference type="FunFam" id="3.40.525.10:FF:000002">
    <property type="entry name" value="Alpha-tocopherol transfer protein-like"/>
    <property type="match status" value="1"/>
</dbReference>
<dbReference type="Gene3D" id="1.20.5.1200">
    <property type="entry name" value="Alpha-tocopherol transfer"/>
    <property type="match status" value="1"/>
</dbReference>
<dbReference type="Gene3D" id="3.40.525.10">
    <property type="entry name" value="CRAL-TRIO lipid binding domain"/>
    <property type="match status" value="1"/>
</dbReference>
<dbReference type="Gene3D" id="1.10.8.20">
    <property type="entry name" value="N-terminal domain of phosphatidylinositol transfer protein sec14p"/>
    <property type="match status" value="1"/>
</dbReference>
<dbReference type="InterPro" id="IPR001251">
    <property type="entry name" value="CRAL-TRIO_dom"/>
</dbReference>
<dbReference type="InterPro" id="IPR036865">
    <property type="entry name" value="CRAL-TRIO_dom_sf"/>
</dbReference>
<dbReference type="InterPro" id="IPR011074">
    <property type="entry name" value="CRAL/TRIO_N_dom"/>
</dbReference>
<dbReference type="InterPro" id="IPR036273">
    <property type="entry name" value="CRAL/TRIO_N_dom_sf"/>
</dbReference>
<dbReference type="PANTHER" id="PTHR10174">
    <property type="entry name" value="ALPHA-TOCOPHEROL TRANSFER PROTEIN-RELATED"/>
    <property type="match status" value="1"/>
</dbReference>
<dbReference type="PANTHER" id="PTHR10174:SF72">
    <property type="entry name" value="CLAVESIN-1"/>
    <property type="match status" value="1"/>
</dbReference>
<dbReference type="Pfam" id="PF00650">
    <property type="entry name" value="CRAL_TRIO"/>
    <property type="match status" value="1"/>
</dbReference>
<dbReference type="Pfam" id="PF03765">
    <property type="entry name" value="CRAL_TRIO_N"/>
    <property type="match status" value="1"/>
</dbReference>
<dbReference type="PRINTS" id="PR00180">
    <property type="entry name" value="CRETINALDHBP"/>
</dbReference>
<dbReference type="SMART" id="SM01100">
    <property type="entry name" value="CRAL_TRIO_N"/>
    <property type="match status" value="1"/>
</dbReference>
<dbReference type="SMART" id="SM00516">
    <property type="entry name" value="SEC14"/>
    <property type="match status" value="1"/>
</dbReference>
<dbReference type="SUPFAM" id="SSF52087">
    <property type="entry name" value="CRAL/TRIO domain"/>
    <property type="match status" value="1"/>
</dbReference>
<dbReference type="SUPFAM" id="SSF46938">
    <property type="entry name" value="CRAL/TRIO N-terminal domain"/>
    <property type="match status" value="1"/>
</dbReference>
<dbReference type="PROSITE" id="PS50191">
    <property type="entry name" value="CRAL_TRIO"/>
    <property type="match status" value="1"/>
</dbReference>
<protein>
    <recommendedName>
        <fullName>Clavesin-1</fullName>
    </recommendedName>
    <alternativeName>
        <fullName>Retinaldehyde-binding protein 1-like 1</fullName>
    </alternativeName>
</protein>
<gene>
    <name type="primary">clvs1</name>
    <name type="synonym">rlbp1l1</name>
</gene>
<evidence type="ECO:0000250" key="1"/>
<evidence type="ECO:0000255" key="2">
    <source>
        <dbReference type="PROSITE-ProRule" id="PRU00056"/>
    </source>
</evidence>
<evidence type="ECO:0000256" key="3">
    <source>
        <dbReference type="SAM" id="MobiDB-lite"/>
    </source>
</evidence>
<comment type="function">
    <text evidence="1">Required for normal morphology of late endosomes and/or lysosomes in neurons. Binds phosphatidylinositol 3,5-bisphosphate (PtdIns(3,5)P2) (By similarity).</text>
</comment>
<comment type="subcellular location">
    <subcellularLocation>
        <location evidence="1">Golgi apparatus</location>
        <location evidence="1">trans-Golgi network membrane</location>
        <topology evidence="1">Peripheral membrane protein</topology>
    </subcellularLocation>
    <subcellularLocation>
        <location evidence="1">Early endosome membrane</location>
        <topology evidence="1">Peripheral membrane protein</topology>
    </subcellularLocation>
    <subcellularLocation>
        <location evidence="1">Cytoplasmic vesicle</location>
        <location evidence="1">Clathrin-coated vesicle</location>
    </subcellularLocation>
</comment>
<comment type="domain">
    <text evidence="1">The CRAL-TRIO domain is required for targeting to the membrane and for binding PtdIns(3,5)P2.</text>
</comment>
<comment type="miscellaneous">
    <text evidence="1">Binding to PtdIns(3,5)P2 is not required for localization.</text>
</comment>
<reference key="1">
    <citation type="submission" date="2004-12" db="EMBL/GenBank/DDBJ databases">
        <authorList>
            <consortium name="NIH - Xenopus Gene Collection (XGC) project"/>
        </authorList>
    </citation>
    <scope>NUCLEOTIDE SEQUENCE [LARGE SCALE MRNA]</scope>
    <source>
        <tissue>Testis</tissue>
    </source>
</reference>
<name>CLVS1_XENLA</name>
<sequence>MTHLHAGLNPETIEKGRLELNENPDTLHQDIQQVRDMIITRPDIGFLRTDDAFILRFLRARKFNQMEAFRLLAQYFQYRQLNLDMFKNLKADDPGIKRALMDGFPGVLENRDHYGRKILLLFAANWDQSRNSFVDILRAILLSLEVLIEDQELQINGFILIIDWSNFSFKQASKLTPSILRLAIEGLQDSFPARFGGVHFVNQPWYIHALYTIIKPFLKDKTRKRIFLHGNNLNSLHQLIHPDCLPSEFGGTLPPYDMGTWARTLLGPDYNDENEYTHSSYNVIHVKHVPAIVEGEDSPKYMKRSHSVVEPGTLRHEEERENENTQPLLALD</sequence>
<proteinExistence type="evidence at transcript level"/>